<name>RLMM_SHIFL</name>
<dbReference type="EC" id="2.1.1.186" evidence="1"/>
<dbReference type="EMBL" id="AE005674">
    <property type="protein sequence ID" value="AAN44307.1"/>
    <property type="molecule type" value="Genomic_DNA"/>
</dbReference>
<dbReference type="EMBL" id="AE014073">
    <property type="protein sequence ID" value="AAP18132.1"/>
    <property type="molecule type" value="Genomic_DNA"/>
</dbReference>
<dbReference type="RefSeq" id="WP_001045525.1">
    <property type="nucleotide sequence ID" value="NZ_WPGW01000008.1"/>
</dbReference>
<dbReference type="SMR" id="Q83JW6"/>
<dbReference type="STRING" id="198214.SF2820"/>
<dbReference type="PaxDb" id="198214-SF2820"/>
<dbReference type="KEGG" id="sfl:SF2820"/>
<dbReference type="KEGG" id="sfx:S3015"/>
<dbReference type="PATRIC" id="fig|198214.7.peg.3357"/>
<dbReference type="HOGENOM" id="CLU_043780_0_0_6"/>
<dbReference type="Proteomes" id="UP000001006">
    <property type="component" value="Chromosome"/>
</dbReference>
<dbReference type="Proteomes" id="UP000002673">
    <property type="component" value="Chromosome"/>
</dbReference>
<dbReference type="GO" id="GO:0005737">
    <property type="term" value="C:cytoplasm"/>
    <property type="evidence" value="ECO:0007669"/>
    <property type="project" value="UniProtKB-SubCell"/>
</dbReference>
<dbReference type="GO" id="GO:0008757">
    <property type="term" value="F:S-adenosylmethionine-dependent methyltransferase activity"/>
    <property type="evidence" value="ECO:0007669"/>
    <property type="project" value="UniProtKB-UniRule"/>
</dbReference>
<dbReference type="GO" id="GO:0032259">
    <property type="term" value="P:methylation"/>
    <property type="evidence" value="ECO:0007669"/>
    <property type="project" value="UniProtKB-KW"/>
</dbReference>
<dbReference type="GO" id="GO:0006364">
    <property type="term" value="P:rRNA processing"/>
    <property type="evidence" value="ECO:0007669"/>
    <property type="project" value="UniProtKB-UniRule"/>
</dbReference>
<dbReference type="FunFam" id="3.30.2300.20:FF:000001">
    <property type="entry name" value="Ribosomal RNA large subunit methyltransferase M"/>
    <property type="match status" value="1"/>
</dbReference>
<dbReference type="FunFam" id="3.30.70.2810:FF:000001">
    <property type="entry name" value="Ribosomal RNA large subunit methyltransferase M"/>
    <property type="match status" value="1"/>
</dbReference>
<dbReference type="FunFam" id="3.40.50.150:FF:000020">
    <property type="entry name" value="Ribosomal RNA large subunit methyltransferase M"/>
    <property type="match status" value="1"/>
</dbReference>
<dbReference type="Gene3D" id="3.30.2300.20">
    <property type="match status" value="1"/>
</dbReference>
<dbReference type="Gene3D" id="3.30.70.2810">
    <property type="match status" value="1"/>
</dbReference>
<dbReference type="Gene3D" id="3.40.50.150">
    <property type="entry name" value="Vaccinia Virus protein VP39"/>
    <property type="match status" value="1"/>
</dbReference>
<dbReference type="HAMAP" id="MF_01551">
    <property type="entry name" value="23SrRNA_methyltr_M"/>
    <property type="match status" value="1"/>
</dbReference>
<dbReference type="InterPro" id="IPR040739">
    <property type="entry name" value="RlmM_FDX"/>
</dbReference>
<dbReference type="InterPro" id="IPR048646">
    <property type="entry name" value="RlmM_THUMP-like"/>
</dbReference>
<dbReference type="InterPro" id="IPR002877">
    <property type="entry name" value="RNA_MeTrfase_FtsJ_dom"/>
</dbReference>
<dbReference type="InterPro" id="IPR011224">
    <property type="entry name" value="rRNA_MeTrfase_M"/>
</dbReference>
<dbReference type="InterPro" id="IPR029063">
    <property type="entry name" value="SAM-dependent_MTases_sf"/>
</dbReference>
<dbReference type="NCBIfam" id="NF008734">
    <property type="entry name" value="PRK11760.1"/>
    <property type="match status" value="1"/>
</dbReference>
<dbReference type="PANTHER" id="PTHR37524">
    <property type="entry name" value="RIBOSOMAL RNA LARGE SUBUNIT METHYLTRANSFERASE M"/>
    <property type="match status" value="1"/>
</dbReference>
<dbReference type="PANTHER" id="PTHR37524:SF2">
    <property type="entry name" value="RIBOSOMAL RNA METHYLTRANSFERASE FTSJ DOMAIN-CONTAINING PROTEIN"/>
    <property type="match status" value="1"/>
</dbReference>
<dbReference type="Pfam" id="PF01728">
    <property type="entry name" value="FtsJ"/>
    <property type="match status" value="1"/>
</dbReference>
<dbReference type="Pfam" id="PF18125">
    <property type="entry name" value="RlmM_FDX"/>
    <property type="match status" value="1"/>
</dbReference>
<dbReference type="Pfam" id="PF21239">
    <property type="entry name" value="RLMM_N"/>
    <property type="match status" value="1"/>
</dbReference>
<dbReference type="PIRSF" id="PIRSF028774">
    <property type="entry name" value="UCP028774"/>
    <property type="match status" value="1"/>
</dbReference>
<dbReference type="SUPFAM" id="SSF53335">
    <property type="entry name" value="S-adenosyl-L-methionine-dependent methyltransferases"/>
    <property type="match status" value="1"/>
</dbReference>
<accession>Q83JW6</accession>
<accession>Q7C070</accession>
<protein>
    <recommendedName>
        <fullName evidence="1">Ribosomal RNA large subunit methyltransferase M</fullName>
        <ecNumber evidence="1">2.1.1.186</ecNumber>
    </recommendedName>
    <alternativeName>
        <fullName evidence="1">23S rRNA (cytidine2498-2'-O)-methyltransferase</fullName>
    </alternativeName>
    <alternativeName>
        <fullName evidence="1">23S rRNA 2'-O-ribose methyltransferase RlmM</fullName>
    </alternativeName>
</protein>
<reference key="1">
    <citation type="journal article" date="2002" name="Nucleic Acids Res.">
        <title>Genome sequence of Shigella flexneri 2a: insights into pathogenicity through comparison with genomes of Escherichia coli K12 and O157.</title>
        <authorList>
            <person name="Jin Q."/>
            <person name="Yuan Z."/>
            <person name="Xu J."/>
            <person name="Wang Y."/>
            <person name="Shen Y."/>
            <person name="Lu W."/>
            <person name="Wang J."/>
            <person name="Liu H."/>
            <person name="Yang J."/>
            <person name="Yang F."/>
            <person name="Zhang X."/>
            <person name="Zhang J."/>
            <person name="Yang G."/>
            <person name="Wu H."/>
            <person name="Qu D."/>
            <person name="Dong J."/>
            <person name="Sun L."/>
            <person name="Xue Y."/>
            <person name="Zhao A."/>
            <person name="Gao Y."/>
            <person name="Zhu J."/>
            <person name="Kan B."/>
            <person name="Ding K."/>
            <person name="Chen S."/>
            <person name="Cheng H."/>
            <person name="Yao Z."/>
            <person name="He B."/>
            <person name="Chen R."/>
            <person name="Ma D."/>
            <person name="Qiang B."/>
            <person name="Wen Y."/>
            <person name="Hou Y."/>
            <person name="Yu J."/>
        </authorList>
    </citation>
    <scope>NUCLEOTIDE SEQUENCE [LARGE SCALE GENOMIC DNA]</scope>
    <source>
        <strain>301 / Serotype 2a</strain>
    </source>
</reference>
<reference key="2">
    <citation type="journal article" date="2003" name="Infect. Immun.">
        <title>Complete genome sequence and comparative genomics of Shigella flexneri serotype 2a strain 2457T.</title>
        <authorList>
            <person name="Wei J."/>
            <person name="Goldberg M.B."/>
            <person name="Burland V."/>
            <person name="Venkatesan M.M."/>
            <person name="Deng W."/>
            <person name="Fournier G."/>
            <person name="Mayhew G.F."/>
            <person name="Plunkett G. III"/>
            <person name="Rose D.J."/>
            <person name="Darling A."/>
            <person name="Mau B."/>
            <person name="Perna N.T."/>
            <person name="Payne S.M."/>
            <person name="Runyen-Janecky L.J."/>
            <person name="Zhou S."/>
            <person name="Schwartz D.C."/>
            <person name="Blattner F.R."/>
        </authorList>
    </citation>
    <scope>NUCLEOTIDE SEQUENCE [LARGE SCALE GENOMIC DNA]</scope>
    <source>
        <strain>ATCC 700930 / 2457T / Serotype 2a</strain>
    </source>
</reference>
<comment type="function">
    <text evidence="1">Catalyzes the 2'-O-methylation at nucleotide C2498 in 23S rRNA.</text>
</comment>
<comment type="catalytic activity">
    <reaction evidence="1">
        <text>cytidine(2498) in 23S rRNA + S-adenosyl-L-methionine = 2'-O-methylcytidine(2498) in 23S rRNA + S-adenosyl-L-homocysteine + H(+)</text>
        <dbReference type="Rhea" id="RHEA:42788"/>
        <dbReference type="Rhea" id="RHEA-COMP:10244"/>
        <dbReference type="Rhea" id="RHEA-COMP:10245"/>
        <dbReference type="ChEBI" id="CHEBI:15378"/>
        <dbReference type="ChEBI" id="CHEBI:57856"/>
        <dbReference type="ChEBI" id="CHEBI:59789"/>
        <dbReference type="ChEBI" id="CHEBI:74495"/>
        <dbReference type="ChEBI" id="CHEBI:82748"/>
        <dbReference type="EC" id="2.1.1.186"/>
    </reaction>
</comment>
<comment type="subunit">
    <text evidence="1">Monomer.</text>
</comment>
<comment type="subcellular location">
    <subcellularLocation>
        <location evidence="1">Cytoplasm</location>
    </subcellularLocation>
</comment>
<comment type="similarity">
    <text evidence="1">Belongs to the class I-like SAM-binding methyltransferase superfamily. RNA methyltransferase RlmE family. RlmM subfamily.</text>
</comment>
<gene>
    <name evidence="1" type="primary">rlmM</name>
    <name type="ordered locus">SF2820</name>
    <name type="ordered locus">S3015</name>
</gene>
<sequence>MNKVVLLCRPGFEKECAAEITDKAGQREIFGFARVKENAGYVIYECYQPDDGDKLIRELPFSSLIFARQWFVVGELLQHLPPEDRITPIVGMLQGVVEKGGELRVEVADTNESKELLKFCRKFTVPLRAALRDAGVLANYETPKRPVVHVFFIAPGCCYTGYSYSNNNSPFYMGIPRLKFPAEAPSRSTLKLEEAFHVFIPADEWDERLANGMWAVDLGACPGGWTYQLVKRNMWVYSVDNGPMAQSLMDTGQVTWLREDGFKFRPTRSNISWMVCDMVEKPAKVAALMAQWLVNGWCRETIFNLKLPMKKRYEEVSHNLAYIQAQLDEHGINAQIQARQLYHDREEVTVHVRRIWAAVGGRRDER</sequence>
<proteinExistence type="inferred from homology"/>
<keyword id="KW-0963">Cytoplasm</keyword>
<keyword id="KW-0489">Methyltransferase</keyword>
<keyword id="KW-1185">Reference proteome</keyword>
<keyword id="KW-0698">rRNA processing</keyword>
<keyword id="KW-0949">S-adenosyl-L-methionine</keyword>
<keyword id="KW-0808">Transferase</keyword>
<organism>
    <name type="scientific">Shigella flexneri</name>
    <dbReference type="NCBI Taxonomy" id="623"/>
    <lineage>
        <taxon>Bacteria</taxon>
        <taxon>Pseudomonadati</taxon>
        <taxon>Pseudomonadota</taxon>
        <taxon>Gammaproteobacteria</taxon>
        <taxon>Enterobacterales</taxon>
        <taxon>Enterobacteriaceae</taxon>
        <taxon>Shigella</taxon>
    </lineage>
</organism>
<evidence type="ECO:0000255" key="1">
    <source>
        <dbReference type="HAMAP-Rule" id="MF_01551"/>
    </source>
</evidence>
<feature type="chain" id="PRO_0000070427" description="Ribosomal RNA large subunit methyltransferase M">
    <location>
        <begin position="1"/>
        <end position="366"/>
    </location>
</feature>
<feature type="active site" description="Proton acceptor" evidence="1">
    <location>
        <position position="306"/>
    </location>
</feature>
<feature type="binding site" evidence="1">
    <location>
        <position position="188"/>
    </location>
    <ligand>
        <name>S-adenosyl-L-methionine</name>
        <dbReference type="ChEBI" id="CHEBI:59789"/>
    </ligand>
</feature>
<feature type="binding site" evidence="1">
    <location>
        <begin position="221"/>
        <end position="224"/>
    </location>
    <ligand>
        <name>S-adenosyl-L-methionine</name>
        <dbReference type="ChEBI" id="CHEBI:59789"/>
    </ligand>
</feature>
<feature type="binding site" evidence="1">
    <location>
        <position position="240"/>
    </location>
    <ligand>
        <name>S-adenosyl-L-methionine</name>
        <dbReference type="ChEBI" id="CHEBI:59789"/>
    </ligand>
</feature>
<feature type="binding site" evidence="1">
    <location>
        <position position="260"/>
    </location>
    <ligand>
        <name>S-adenosyl-L-methionine</name>
        <dbReference type="ChEBI" id="CHEBI:59789"/>
    </ligand>
</feature>
<feature type="binding site" evidence="1">
    <location>
        <position position="277"/>
    </location>
    <ligand>
        <name>S-adenosyl-L-methionine</name>
        <dbReference type="ChEBI" id="CHEBI:59789"/>
    </ligand>
</feature>